<proteinExistence type="inferred from homology"/>
<keyword id="KW-0997">Cell inner membrane</keyword>
<keyword id="KW-1003">Cell membrane</keyword>
<keyword id="KW-0868">Chloride</keyword>
<keyword id="KW-0869">Chloride channel</keyword>
<keyword id="KW-0407">Ion channel</keyword>
<keyword id="KW-0406">Ion transport</keyword>
<keyword id="KW-0472">Membrane</keyword>
<keyword id="KW-0812">Transmembrane</keyword>
<keyword id="KW-1133">Transmembrane helix</keyword>
<keyword id="KW-0813">Transport</keyword>
<keyword id="KW-0851">Voltage-gated channel</keyword>
<accession>A7FHW4</accession>
<sequence>MLRRLVISIMLGMVSALIVWLFHQAMLGLEWLLFSRTDGSLVAAAASITGWRRALTPALGGLAAGLLLWAYQRYQHRKPSAPTDYMEAIEIGDGRLDVSASLVKSLASLLVVSSGSAIGREGAMVLLAALFASVFAQRYAKPKEWKLWVACGAAAGMASAYHAPLAGSLFIAEILFGTLMLASLGPVVIAAVSALLTTNLLQGGQETLYQVQTLPSPWPVQYFLMALLGLMAGFSGPLFLKAMAASSHAFRSLNLLPPLQLALGGIIVGLLSLIFPEVWGNGYSVVQSLLTTPPGVLLIGGILICKLLAVLASSGSGAPGGVFTPTLFVGAALGMLCGQIFSLWPVLGDNIGLLMALTGMATLLAATTHAPIMAALMVCEMTGEYTLLPGLLLSCVIATTIARWLRPISVYRSH</sequence>
<protein>
    <recommendedName>
        <fullName evidence="1">Voltage-gated ClC-type chloride channel ClcB</fullName>
    </recommendedName>
</protein>
<name>CLCB_YERP3</name>
<dbReference type="EMBL" id="CP000720">
    <property type="protein sequence ID" value="ABS49534.1"/>
    <property type="molecule type" value="Genomic_DNA"/>
</dbReference>
<dbReference type="SMR" id="A7FHW4"/>
<dbReference type="KEGG" id="ypi:YpsIP31758_1867"/>
<dbReference type="HOGENOM" id="CLU_015263_5_2_6"/>
<dbReference type="Proteomes" id="UP000002412">
    <property type="component" value="Chromosome"/>
</dbReference>
<dbReference type="GO" id="GO:0034707">
    <property type="term" value="C:chloride channel complex"/>
    <property type="evidence" value="ECO:0007669"/>
    <property type="project" value="UniProtKB-KW"/>
</dbReference>
<dbReference type="GO" id="GO:0005886">
    <property type="term" value="C:plasma membrane"/>
    <property type="evidence" value="ECO:0007669"/>
    <property type="project" value="UniProtKB-SubCell"/>
</dbReference>
<dbReference type="GO" id="GO:0005247">
    <property type="term" value="F:voltage-gated chloride channel activity"/>
    <property type="evidence" value="ECO:0007669"/>
    <property type="project" value="UniProtKB-UniRule"/>
</dbReference>
<dbReference type="GO" id="GO:0010447">
    <property type="term" value="P:response to acidic pH"/>
    <property type="evidence" value="ECO:0007669"/>
    <property type="project" value="InterPro"/>
</dbReference>
<dbReference type="CDD" id="cd00400">
    <property type="entry name" value="Voltage_gated_ClC"/>
    <property type="match status" value="1"/>
</dbReference>
<dbReference type="FunFam" id="1.10.3080.10:FF:000010">
    <property type="entry name" value="Voltage-gated ClC-type chloride channel ClcB"/>
    <property type="match status" value="1"/>
</dbReference>
<dbReference type="Gene3D" id="1.10.3080.10">
    <property type="entry name" value="Clc chloride channel"/>
    <property type="match status" value="1"/>
</dbReference>
<dbReference type="HAMAP" id="MF_01203">
    <property type="entry name" value="CLC_ClcB"/>
    <property type="match status" value="1"/>
</dbReference>
<dbReference type="InterPro" id="IPR014743">
    <property type="entry name" value="Cl-channel_core"/>
</dbReference>
<dbReference type="InterPro" id="IPR023790">
    <property type="entry name" value="Cl-channel_volt-gated_ClcB"/>
</dbReference>
<dbReference type="InterPro" id="IPR001807">
    <property type="entry name" value="ClC"/>
</dbReference>
<dbReference type="InterPro" id="IPR050368">
    <property type="entry name" value="ClC-type_chloride_channel"/>
</dbReference>
<dbReference type="NCBIfam" id="NF002437">
    <property type="entry name" value="PRK01610.1"/>
    <property type="match status" value="1"/>
</dbReference>
<dbReference type="PANTHER" id="PTHR43427">
    <property type="entry name" value="CHLORIDE CHANNEL PROTEIN CLC-E"/>
    <property type="match status" value="1"/>
</dbReference>
<dbReference type="PANTHER" id="PTHR43427:SF6">
    <property type="entry name" value="CHLORIDE CHANNEL PROTEIN CLC-E"/>
    <property type="match status" value="1"/>
</dbReference>
<dbReference type="Pfam" id="PF00654">
    <property type="entry name" value="Voltage_CLC"/>
    <property type="match status" value="1"/>
</dbReference>
<dbReference type="PRINTS" id="PR00762">
    <property type="entry name" value="CLCHANNEL"/>
</dbReference>
<dbReference type="SUPFAM" id="SSF81340">
    <property type="entry name" value="Clc chloride channel"/>
    <property type="match status" value="1"/>
</dbReference>
<comment type="function">
    <text evidence="1">Probably acts as an electrical shunt for an outwardly-directed proton pump that is linked to amino acid decarboxylation, as part of the extreme acid resistance (XAR) response.</text>
</comment>
<comment type="subcellular location">
    <subcellularLocation>
        <location evidence="1">Cell inner membrane</location>
        <topology evidence="1">Multi-pass membrane protein</topology>
    </subcellularLocation>
</comment>
<comment type="similarity">
    <text evidence="1">Belongs to the chloride channel (TC 2.A.49) family. ClcB subfamily.</text>
</comment>
<gene>
    <name evidence="1" type="primary">clcB</name>
    <name type="ordered locus">YpsIP31758_1867</name>
</gene>
<feature type="chain" id="PRO_1000066133" description="Voltage-gated ClC-type chloride channel ClcB">
    <location>
        <begin position="1"/>
        <end position="414"/>
    </location>
</feature>
<feature type="transmembrane region" description="Helical" evidence="1">
    <location>
        <begin position="5"/>
        <end position="25"/>
    </location>
</feature>
<feature type="transmembrane region" description="Helical" evidence="1">
    <location>
        <begin position="54"/>
        <end position="74"/>
    </location>
</feature>
<feature type="transmembrane region" description="Helical" evidence="1">
    <location>
        <begin position="116"/>
        <end position="136"/>
    </location>
</feature>
<feature type="transmembrane region" description="Helical" evidence="1">
    <location>
        <begin position="147"/>
        <end position="167"/>
    </location>
</feature>
<feature type="transmembrane region" description="Helical" evidence="1">
    <location>
        <begin position="169"/>
        <end position="189"/>
    </location>
</feature>
<feature type="transmembrane region" description="Helical" evidence="1">
    <location>
        <begin position="220"/>
        <end position="240"/>
    </location>
</feature>
<feature type="transmembrane region" description="Helical" evidence="1">
    <location>
        <begin position="255"/>
        <end position="275"/>
    </location>
</feature>
<feature type="transmembrane region" description="Helical" evidence="1">
    <location>
        <begin position="292"/>
        <end position="312"/>
    </location>
</feature>
<feature type="transmembrane region" description="Helical" evidence="1">
    <location>
        <begin position="327"/>
        <end position="347"/>
    </location>
</feature>
<feature type="transmembrane region" description="Helical" evidence="1">
    <location>
        <begin position="353"/>
        <end position="373"/>
    </location>
</feature>
<feature type="transmembrane region" description="Helical" evidence="1">
    <location>
        <begin position="381"/>
        <end position="401"/>
    </location>
</feature>
<evidence type="ECO:0000255" key="1">
    <source>
        <dbReference type="HAMAP-Rule" id="MF_01203"/>
    </source>
</evidence>
<reference key="1">
    <citation type="journal article" date="2007" name="PLoS Genet.">
        <title>The complete genome sequence of Yersinia pseudotuberculosis IP31758, the causative agent of Far East scarlet-like fever.</title>
        <authorList>
            <person name="Eppinger M."/>
            <person name="Rosovitz M.J."/>
            <person name="Fricke W.F."/>
            <person name="Rasko D.A."/>
            <person name="Kokorina G."/>
            <person name="Fayolle C."/>
            <person name="Lindler L.E."/>
            <person name="Carniel E."/>
            <person name="Ravel J."/>
        </authorList>
    </citation>
    <scope>NUCLEOTIDE SEQUENCE [LARGE SCALE GENOMIC DNA]</scope>
    <source>
        <strain>IP 31758</strain>
    </source>
</reference>
<organism>
    <name type="scientific">Yersinia pseudotuberculosis serotype O:1b (strain IP 31758)</name>
    <dbReference type="NCBI Taxonomy" id="349747"/>
    <lineage>
        <taxon>Bacteria</taxon>
        <taxon>Pseudomonadati</taxon>
        <taxon>Pseudomonadota</taxon>
        <taxon>Gammaproteobacteria</taxon>
        <taxon>Enterobacterales</taxon>
        <taxon>Yersiniaceae</taxon>
        <taxon>Yersinia</taxon>
    </lineage>
</organism>